<proteinExistence type="inferred from homology"/>
<reference key="1">
    <citation type="journal article" date="2008" name="PLoS Genet.">
        <title>Complete genome sequence of the N2-fixing broad host range endophyte Klebsiella pneumoniae 342 and virulence predictions verified in mice.</title>
        <authorList>
            <person name="Fouts D.E."/>
            <person name="Tyler H.L."/>
            <person name="DeBoy R.T."/>
            <person name="Daugherty S."/>
            <person name="Ren Q."/>
            <person name="Badger J.H."/>
            <person name="Durkin A.S."/>
            <person name="Huot H."/>
            <person name="Shrivastava S."/>
            <person name="Kothari S."/>
            <person name="Dodson R.J."/>
            <person name="Mohamoud Y."/>
            <person name="Khouri H."/>
            <person name="Roesch L.F.W."/>
            <person name="Krogfelt K.A."/>
            <person name="Struve C."/>
            <person name="Triplett E.W."/>
            <person name="Methe B.A."/>
        </authorList>
    </citation>
    <scope>NUCLEOTIDE SEQUENCE [LARGE SCALE GENOMIC DNA]</scope>
    <source>
        <strain>342</strain>
    </source>
</reference>
<protein>
    <recommendedName>
        <fullName evidence="1">DNA protection during starvation protein</fullName>
        <ecNumber evidence="1">1.16.-.-</ecNumber>
    </recommendedName>
</protein>
<gene>
    <name evidence="1" type="primary">dps</name>
    <name type="ordered locus">KPK_3728</name>
</gene>
<sequence>MSTAKLVKSKASNLVYTRNDVADSEKKATIELLNRQVIQFIDLSLITKQAHWNMRGANFIAVHEMLDGFRTALTEHLDTMAERAVQLGGVALGTTQVINSKTPLQSYPLDIHHVQDHLKALADRYAVVANDVRKAIDEAKDEDTADIFTAASRDLDKFLWFIEANIE</sequence>
<keyword id="KW-0963">Cytoplasm</keyword>
<keyword id="KW-0226">DNA condensation</keyword>
<keyword id="KW-0238">DNA-binding</keyword>
<keyword id="KW-0408">Iron</keyword>
<keyword id="KW-0409">Iron storage</keyword>
<keyword id="KW-0479">Metal-binding</keyword>
<keyword id="KW-0560">Oxidoreductase</keyword>
<comment type="function">
    <text evidence="1">During stationary phase, binds the chromosome non-specifically, forming a highly ordered and stable dps-DNA co-crystal within which chromosomal DNA is condensed and protected from diverse damages. It protects DNA from oxidative damage by sequestering intracellular Fe(2+) ion and storing it in the form of Fe(3+) oxyhydroxide mineral, which can be released after reduction. One hydrogen peroxide oxidizes two Fe(2+) ions, which prevents hydroxyl radical production by the Fenton reaction.</text>
</comment>
<comment type="catalytic activity">
    <reaction evidence="1">
        <text>2 Fe(2+) + H2O2 + 2 H(+) = 2 Fe(3+) + 2 H2O</text>
        <dbReference type="Rhea" id="RHEA:48712"/>
        <dbReference type="ChEBI" id="CHEBI:15377"/>
        <dbReference type="ChEBI" id="CHEBI:15378"/>
        <dbReference type="ChEBI" id="CHEBI:16240"/>
        <dbReference type="ChEBI" id="CHEBI:29033"/>
        <dbReference type="ChEBI" id="CHEBI:29034"/>
    </reaction>
</comment>
<comment type="subunit">
    <text evidence="1">Homododecamer. The 12 subunits form a hollow sphere into which the mineral iron core of up to 500 Fe(3+) can be deposited.</text>
</comment>
<comment type="subcellular location">
    <subcellularLocation>
        <location evidence="1">Cytoplasm</location>
    </subcellularLocation>
</comment>
<comment type="similarity">
    <text evidence="1">Belongs to the Dps family.</text>
</comment>
<feature type="chain" id="PRO_1000145908" description="DNA protection during starvation protein">
    <location>
        <begin position="1"/>
        <end position="167"/>
    </location>
</feature>
<feature type="binding site" evidence="1">
    <location>
        <position position="51"/>
    </location>
    <ligand>
        <name>Fe cation</name>
        <dbReference type="ChEBI" id="CHEBI:24875"/>
    </ligand>
</feature>
<feature type="binding site" evidence="1">
    <location>
        <position position="78"/>
    </location>
    <ligand>
        <name>Fe cation</name>
        <dbReference type="ChEBI" id="CHEBI:24875"/>
    </ligand>
</feature>
<feature type="binding site" evidence="1">
    <location>
        <position position="82"/>
    </location>
    <ligand>
        <name>Fe cation</name>
        <dbReference type="ChEBI" id="CHEBI:24875"/>
    </ligand>
</feature>
<evidence type="ECO:0000255" key="1">
    <source>
        <dbReference type="HAMAP-Rule" id="MF_01441"/>
    </source>
</evidence>
<dbReference type="EC" id="1.16.-.-" evidence="1"/>
<dbReference type="EMBL" id="CP000964">
    <property type="protein sequence ID" value="ACI08129.1"/>
    <property type="molecule type" value="Genomic_DNA"/>
</dbReference>
<dbReference type="SMR" id="B5XYT2"/>
<dbReference type="KEGG" id="kpe:KPK_3728"/>
<dbReference type="HOGENOM" id="CLU_098183_1_2_6"/>
<dbReference type="Proteomes" id="UP000001734">
    <property type="component" value="Chromosome"/>
</dbReference>
<dbReference type="GO" id="GO:0005737">
    <property type="term" value="C:cytoplasm"/>
    <property type="evidence" value="ECO:0007669"/>
    <property type="project" value="UniProtKB-SubCell"/>
</dbReference>
<dbReference type="GO" id="GO:0003677">
    <property type="term" value="F:DNA binding"/>
    <property type="evidence" value="ECO:0007669"/>
    <property type="project" value="UniProtKB-UniRule"/>
</dbReference>
<dbReference type="GO" id="GO:0008199">
    <property type="term" value="F:ferric iron binding"/>
    <property type="evidence" value="ECO:0007669"/>
    <property type="project" value="UniProtKB-UniRule"/>
</dbReference>
<dbReference type="GO" id="GO:0016722">
    <property type="term" value="F:oxidoreductase activity, acting on metal ions"/>
    <property type="evidence" value="ECO:0007669"/>
    <property type="project" value="InterPro"/>
</dbReference>
<dbReference type="GO" id="GO:0030261">
    <property type="term" value="P:chromosome condensation"/>
    <property type="evidence" value="ECO:0007669"/>
    <property type="project" value="UniProtKB-KW"/>
</dbReference>
<dbReference type="GO" id="GO:0006879">
    <property type="term" value="P:intracellular iron ion homeostasis"/>
    <property type="evidence" value="ECO:0007669"/>
    <property type="project" value="UniProtKB-KW"/>
</dbReference>
<dbReference type="CDD" id="cd01043">
    <property type="entry name" value="DPS"/>
    <property type="match status" value="1"/>
</dbReference>
<dbReference type="FunFam" id="1.20.1260.10:FF:000003">
    <property type="entry name" value="DNA protection during starvation protein"/>
    <property type="match status" value="1"/>
</dbReference>
<dbReference type="Gene3D" id="1.20.1260.10">
    <property type="match status" value="1"/>
</dbReference>
<dbReference type="HAMAP" id="MF_01441">
    <property type="entry name" value="Dps"/>
    <property type="match status" value="1"/>
</dbReference>
<dbReference type="InterPro" id="IPR002177">
    <property type="entry name" value="DPS_DNA-bd"/>
</dbReference>
<dbReference type="InterPro" id="IPR023188">
    <property type="entry name" value="DPS_DNA-bd_CS"/>
</dbReference>
<dbReference type="InterPro" id="IPR023067">
    <property type="entry name" value="Dps_gammaproteobac"/>
</dbReference>
<dbReference type="InterPro" id="IPR012347">
    <property type="entry name" value="Ferritin-like"/>
</dbReference>
<dbReference type="InterPro" id="IPR009078">
    <property type="entry name" value="Ferritin-like_SF"/>
</dbReference>
<dbReference type="InterPro" id="IPR008331">
    <property type="entry name" value="Ferritin_DPS_dom"/>
</dbReference>
<dbReference type="NCBIfam" id="NF006975">
    <property type="entry name" value="PRK09448.1"/>
    <property type="match status" value="1"/>
</dbReference>
<dbReference type="PANTHER" id="PTHR42932:SF3">
    <property type="entry name" value="DNA PROTECTION DURING STARVATION PROTEIN"/>
    <property type="match status" value="1"/>
</dbReference>
<dbReference type="PANTHER" id="PTHR42932">
    <property type="entry name" value="GENERAL STRESS PROTEIN 20U"/>
    <property type="match status" value="1"/>
</dbReference>
<dbReference type="Pfam" id="PF00210">
    <property type="entry name" value="Ferritin"/>
    <property type="match status" value="1"/>
</dbReference>
<dbReference type="PIRSF" id="PIRSF005900">
    <property type="entry name" value="Dps"/>
    <property type="match status" value="1"/>
</dbReference>
<dbReference type="PRINTS" id="PR01346">
    <property type="entry name" value="HELNAPAPROT"/>
</dbReference>
<dbReference type="SUPFAM" id="SSF47240">
    <property type="entry name" value="Ferritin-like"/>
    <property type="match status" value="1"/>
</dbReference>
<dbReference type="PROSITE" id="PS00818">
    <property type="entry name" value="DPS_1"/>
    <property type="match status" value="1"/>
</dbReference>
<dbReference type="PROSITE" id="PS00819">
    <property type="entry name" value="DPS_2"/>
    <property type="match status" value="1"/>
</dbReference>
<organism>
    <name type="scientific">Klebsiella pneumoniae (strain 342)</name>
    <dbReference type="NCBI Taxonomy" id="507522"/>
    <lineage>
        <taxon>Bacteria</taxon>
        <taxon>Pseudomonadati</taxon>
        <taxon>Pseudomonadota</taxon>
        <taxon>Gammaproteobacteria</taxon>
        <taxon>Enterobacterales</taxon>
        <taxon>Enterobacteriaceae</taxon>
        <taxon>Klebsiella/Raoultella group</taxon>
        <taxon>Klebsiella</taxon>
        <taxon>Klebsiella pneumoniae complex</taxon>
    </lineage>
</organism>
<accession>B5XYT2</accession>
<name>DPS_KLEP3</name>